<sequence length="298" mass="33265">MKDFISIRDFDRAAIDRLIAEAERIDHHQYDPLEMKGKILALLFFEPSTRTRMSFEAAMARLGGTSLTLSSFEASSMAKGETLADTIRVVSGYVDAIVLRHPREGAARLASEVSSVPVINAGDGAGQHPSQTLLDLYTIRQSMPIDGINIGLLGDLRYGRTTHSLTYALSLYDAVIHTVAPAGLNLPSGLVHELRELGTEVIEHEQIEDVIKELDVLYVTRIQRERFPDTASYFNVASSYRITPELLRGTKEHMVVLHPLPRVDEIDPRVDKMKNARYFEQSHNGVPVRMAMLKQVIA</sequence>
<dbReference type="EC" id="2.1.3.2" evidence="1"/>
<dbReference type="EMBL" id="CP001338">
    <property type="protein sequence ID" value="ACL17809.1"/>
    <property type="molecule type" value="Genomic_DNA"/>
</dbReference>
<dbReference type="RefSeq" id="WP_012619128.1">
    <property type="nucleotide sequence ID" value="NC_011832.1"/>
</dbReference>
<dbReference type="SMR" id="B8GF03"/>
<dbReference type="STRING" id="521011.Mpal_2536"/>
<dbReference type="GeneID" id="7271705"/>
<dbReference type="KEGG" id="mpl:Mpal_2536"/>
<dbReference type="eggNOG" id="arCOG00911">
    <property type="taxonomic scope" value="Archaea"/>
</dbReference>
<dbReference type="HOGENOM" id="CLU_043846_1_2_2"/>
<dbReference type="OrthoDB" id="7792at2157"/>
<dbReference type="UniPathway" id="UPA00070">
    <property type="reaction ID" value="UER00116"/>
</dbReference>
<dbReference type="Proteomes" id="UP000002457">
    <property type="component" value="Chromosome"/>
</dbReference>
<dbReference type="GO" id="GO:0016597">
    <property type="term" value="F:amino acid binding"/>
    <property type="evidence" value="ECO:0007669"/>
    <property type="project" value="InterPro"/>
</dbReference>
<dbReference type="GO" id="GO:0004070">
    <property type="term" value="F:aspartate carbamoyltransferase activity"/>
    <property type="evidence" value="ECO:0007669"/>
    <property type="project" value="UniProtKB-UniRule"/>
</dbReference>
<dbReference type="GO" id="GO:0006207">
    <property type="term" value="P:'de novo' pyrimidine nucleobase biosynthetic process"/>
    <property type="evidence" value="ECO:0007669"/>
    <property type="project" value="InterPro"/>
</dbReference>
<dbReference type="GO" id="GO:0044205">
    <property type="term" value="P:'de novo' UMP biosynthetic process"/>
    <property type="evidence" value="ECO:0007669"/>
    <property type="project" value="UniProtKB-UniRule"/>
</dbReference>
<dbReference type="GO" id="GO:0006520">
    <property type="term" value="P:amino acid metabolic process"/>
    <property type="evidence" value="ECO:0007669"/>
    <property type="project" value="InterPro"/>
</dbReference>
<dbReference type="FunFam" id="3.40.50.1370:FF:000001">
    <property type="entry name" value="Aspartate carbamoyltransferase"/>
    <property type="match status" value="1"/>
</dbReference>
<dbReference type="FunFam" id="3.40.50.1370:FF:000002">
    <property type="entry name" value="Aspartate carbamoyltransferase 2"/>
    <property type="match status" value="1"/>
</dbReference>
<dbReference type="Gene3D" id="3.40.50.1370">
    <property type="entry name" value="Aspartate/ornithine carbamoyltransferase"/>
    <property type="match status" value="2"/>
</dbReference>
<dbReference type="HAMAP" id="MF_00001">
    <property type="entry name" value="Asp_carb_tr"/>
    <property type="match status" value="1"/>
</dbReference>
<dbReference type="InterPro" id="IPR006132">
    <property type="entry name" value="Asp/Orn_carbamoyltranf_P-bd"/>
</dbReference>
<dbReference type="InterPro" id="IPR006130">
    <property type="entry name" value="Asp/Orn_carbamoylTrfase"/>
</dbReference>
<dbReference type="InterPro" id="IPR036901">
    <property type="entry name" value="Asp/Orn_carbamoylTrfase_sf"/>
</dbReference>
<dbReference type="InterPro" id="IPR002082">
    <property type="entry name" value="Asp_carbamoyltransf"/>
</dbReference>
<dbReference type="InterPro" id="IPR006131">
    <property type="entry name" value="Asp_carbamoyltransf_Asp/Orn-bd"/>
</dbReference>
<dbReference type="NCBIfam" id="TIGR00670">
    <property type="entry name" value="asp_carb_tr"/>
    <property type="match status" value="1"/>
</dbReference>
<dbReference type="NCBIfam" id="NF002032">
    <property type="entry name" value="PRK00856.1"/>
    <property type="match status" value="1"/>
</dbReference>
<dbReference type="PANTHER" id="PTHR45753:SF6">
    <property type="entry name" value="ASPARTATE CARBAMOYLTRANSFERASE"/>
    <property type="match status" value="1"/>
</dbReference>
<dbReference type="PANTHER" id="PTHR45753">
    <property type="entry name" value="ORNITHINE CARBAMOYLTRANSFERASE, MITOCHONDRIAL"/>
    <property type="match status" value="1"/>
</dbReference>
<dbReference type="Pfam" id="PF00185">
    <property type="entry name" value="OTCace"/>
    <property type="match status" value="1"/>
</dbReference>
<dbReference type="Pfam" id="PF02729">
    <property type="entry name" value="OTCace_N"/>
    <property type="match status" value="1"/>
</dbReference>
<dbReference type="PRINTS" id="PR00100">
    <property type="entry name" value="AOTCASE"/>
</dbReference>
<dbReference type="PRINTS" id="PR00101">
    <property type="entry name" value="ATCASE"/>
</dbReference>
<dbReference type="SUPFAM" id="SSF53671">
    <property type="entry name" value="Aspartate/ornithine carbamoyltransferase"/>
    <property type="match status" value="1"/>
</dbReference>
<dbReference type="PROSITE" id="PS00097">
    <property type="entry name" value="CARBAMOYLTRANSFERASE"/>
    <property type="match status" value="1"/>
</dbReference>
<protein>
    <recommendedName>
        <fullName evidence="1">Aspartate carbamoyltransferase catalytic subunit</fullName>
        <ecNumber evidence="1">2.1.3.2</ecNumber>
    </recommendedName>
    <alternativeName>
        <fullName evidence="1">Aspartate transcarbamylase</fullName>
        <shortName evidence="1">ATCase</shortName>
    </alternativeName>
</protein>
<keyword id="KW-0665">Pyrimidine biosynthesis</keyword>
<keyword id="KW-1185">Reference proteome</keyword>
<keyword id="KW-0808">Transferase</keyword>
<organism>
    <name type="scientific">Methanosphaerula palustris (strain ATCC BAA-1556 / DSM 19958 / E1-9c)</name>
    <dbReference type="NCBI Taxonomy" id="521011"/>
    <lineage>
        <taxon>Archaea</taxon>
        <taxon>Methanobacteriati</taxon>
        <taxon>Methanobacteriota</taxon>
        <taxon>Stenosarchaea group</taxon>
        <taxon>Methanomicrobia</taxon>
        <taxon>Methanomicrobiales</taxon>
        <taxon>Methanoregulaceae</taxon>
        <taxon>Methanosphaerula</taxon>
    </lineage>
</organism>
<accession>B8GF03</accession>
<comment type="function">
    <text evidence="1">Catalyzes the condensation of carbamoyl phosphate and aspartate to form carbamoyl aspartate and inorganic phosphate, the committed step in the de novo pyrimidine nucleotide biosynthesis pathway.</text>
</comment>
<comment type="catalytic activity">
    <reaction evidence="1">
        <text>carbamoyl phosphate + L-aspartate = N-carbamoyl-L-aspartate + phosphate + H(+)</text>
        <dbReference type="Rhea" id="RHEA:20013"/>
        <dbReference type="ChEBI" id="CHEBI:15378"/>
        <dbReference type="ChEBI" id="CHEBI:29991"/>
        <dbReference type="ChEBI" id="CHEBI:32814"/>
        <dbReference type="ChEBI" id="CHEBI:43474"/>
        <dbReference type="ChEBI" id="CHEBI:58228"/>
        <dbReference type="EC" id="2.1.3.2"/>
    </reaction>
</comment>
<comment type="pathway">
    <text evidence="1">Pyrimidine metabolism; UMP biosynthesis via de novo pathway; (S)-dihydroorotate from bicarbonate: step 2/3.</text>
</comment>
<comment type="subunit">
    <text evidence="1">Heterooligomer of catalytic and regulatory chains.</text>
</comment>
<comment type="similarity">
    <text evidence="1">Belongs to the aspartate/ornithine carbamoyltransferase superfamily. ATCase family.</text>
</comment>
<proteinExistence type="inferred from homology"/>
<name>PYRB_METPE</name>
<feature type="chain" id="PRO_1000116150" description="Aspartate carbamoyltransferase catalytic subunit">
    <location>
        <begin position="1"/>
        <end position="298"/>
    </location>
</feature>
<feature type="binding site" evidence="1">
    <location>
        <position position="50"/>
    </location>
    <ligand>
        <name>carbamoyl phosphate</name>
        <dbReference type="ChEBI" id="CHEBI:58228"/>
    </ligand>
</feature>
<feature type="binding site" evidence="1">
    <location>
        <position position="51"/>
    </location>
    <ligand>
        <name>carbamoyl phosphate</name>
        <dbReference type="ChEBI" id="CHEBI:58228"/>
    </ligand>
</feature>
<feature type="binding site" evidence="1">
    <location>
        <position position="79"/>
    </location>
    <ligand>
        <name>L-aspartate</name>
        <dbReference type="ChEBI" id="CHEBI:29991"/>
    </ligand>
</feature>
<feature type="binding site" evidence="1">
    <location>
        <position position="100"/>
    </location>
    <ligand>
        <name>carbamoyl phosphate</name>
        <dbReference type="ChEBI" id="CHEBI:58228"/>
    </ligand>
</feature>
<feature type="binding site" evidence="1">
    <location>
        <position position="128"/>
    </location>
    <ligand>
        <name>carbamoyl phosphate</name>
        <dbReference type="ChEBI" id="CHEBI:58228"/>
    </ligand>
</feature>
<feature type="binding site" evidence="1">
    <location>
        <position position="131"/>
    </location>
    <ligand>
        <name>carbamoyl phosphate</name>
        <dbReference type="ChEBI" id="CHEBI:58228"/>
    </ligand>
</feature>
<feature type="binding site" evidence="1">
    <location>
        <position position="160"/>
    </location>
    <ligand>
        <name>L-aspartate</name>
        <dbReference type="ChEBI" id="CHEBI:29991"/>
    </ligand>
</feature>
<feature type="binding site" evidence="1">
    <location>
        <position position="221"/>
    </location>
    <ligand>
        <name>L-aspartate</name>
        <dbReference type="ChEBI" id="CHEBI:29991"/>
    </ligand>
</feature>
<feature type="binding site" evidence="1">
    <location>
        <position position="260"/>
    </location>
    <ligand>
        <name>carbamoyl phosphate</name>
        <dbReference type="ChEBI" id="CHEBI:58228"/>
    </ligand>
</feature>
<feature type="binding site" evidence="1">
    <location>
        <position position="261"/>
    </location>
    <ligand>
        <name>carbamoyl phosphate</name>
        <dbReference type="ChEBI" id="CHEBI:58228"/>
    </ligand>
</feature>
<reference key="1">
    <citation type="journal article" date="2015" name="Genome Announc.">
        <title>Complete Genome Sequence of Methanosphaerula palustris E1-9CT, a Hydrogenotrophic Methanogen Isolated from a Minerotrophic Fen Peatland.</title>
        <authorList>
            <person name="Cadillo-Quiroz H."/>
            <person name="Browne P."/>
            <person name="Kyrpides N."/>
            <person name="Woyke T."/>
            <person name="Goodwin L."/>
            <person name="Detter C."/>
            <person name="Yavitt J.B."/>
            <person name="Zinder S.H."/>
        </authorList>
    </citation>
    <scope>NUCLEOTIDE SEQUENCE [LARGE SCALE GENOMIC DNA]</scope>
    <source>
        <strain>ATCC BAA-1556 / DSM 19958 / E1-9c</strain>
    </source>
</reference>
<evidence type="ECO:0000255" key="1">
    <source>
        <dbReference type="HAMAP-Rule" id="MF_00001"/>
    </source>
</evidence>
<gene>
    <name evidence="1" type="primary">pyrB</name>
    <name type="ordered locus">Mpal_2536</name>
</gene>